<organism>
    <name type="scientific">Streptococcus pneumoniae (strain ATCC BAA-255 / R6)</name>
    <dbReference type="NCBI Taxonomy" id="171101"/>
    <lineage>
        <taxon>Bacteria</taxon>
        <taxon>Bacillati</taxon>
        <taxon>Bacillota</taxon>
        <taxon>Bacilli</taxon>
        <taxon>Lactobacillales</taxon>
        <taxon>Streptococcaceae</taxon>
        <taxon>Streptococcus</taxon>
    </lineage>
</organism>
<protein>
    <recommendedName>
        <fullName evidence="1">Lysine--tRNA ligase</fullName>
        <ecNumber evidence="1">6.1.1.6</ecNumber>
    </recommendedName>
    <alternativeName>
        <fullName evidence="1">Lysyl-tRNA synthetase</fullName>
        <shortName evidence="1">LysRS</shortName>
    </alternativeName>
</protein>
<sequence>MSTEHMEELNDQQIVRREKMAALREQGIDPFGKRFERTANSQELKDKYANLDKEQLHDKNETATIAGRLVTKRGKGKVGFAHLQDREGQIQIYVRKDAVGEENYEIFKKADLGDFLGVEGEVMRTDMGELSIKATHITHLSKALRPLPEKFHGLTDVETIYRKRYLDLISNRESFERFVTRSKIISEIRRYLDQKGFLEVETPVLHNEAGGAAARPFITHHNAQNIDMVLRIATELHLKRLIVGGMERVYEIGRIFRNEGMDATHNPEFTSIEVYQAYADFQDIMDLTEGIIQHAAKSVKGDGPVNYQGTEIKINEPFKRVHMVDAIREITGVDFWQDMTLEEAKAIAAEKKVPVEKHYTEVGHIINAFFEEFVEETLIQPTFVYGHPVAVSPLAKKNPEDQRFTDRFELFIMTKEYGNAFTELNDPIDQLSRFEAQAKAKELGDDEATGIDYDYIEALEYGMPPTGGLGIGIDRLCMLLTDTTTIRDVLLFPTMK</sequence>
<keyword id="KW-0030">Aminoacyl-tRNA synthetase</keyword>
<keyword id="KW-0067">ATP-binding</keyword>
<keyword id="KW-0963">Cytoplasm</keyword>
<keyword id="KW-0436">Ligase</keyword>
<keyword id="KW-0460">Magnesium</keyword>
<keyword id="KW-0479">Metal-binding</keyword>
<keyword id="KW-0547">Nucleotide-binding</keyword>
<keyword id="KW-0648">Protein biosynthesis</keyword>
<keyword id="KW-1185">Reference proteome</keyword>
<proteinExistence type="inferred from homology"/>
<evidence type="ECO:0000255" key="1">
    <source>
        <dbReference type="HAMAP-Rule" id="MF_00252"/>
    </source>
</evidence>
<accession>Q8CWS5</accession>
<gene>
    <name evidence="1" type="primary">lysS</name>
    <name type="ordered locus">spr0626</name>
</gene>
<dbReference type="EC" id="6.1.1.6" evidence="1"/>
<dbReference type="EMBL" id="AE007317">
    <property type="protein sequence ID" value="AAK99430.1"/>
    <property type="molecule type" value="Genomic_DNA"/>
</dbReference>
<dbReference type="PIR" id="B97950">
    <property type="entry name" value="B97950"/>
</dbReference>
<dbReference type="RefSeq" id="NP_358220.1">
    <property type="nucleotide sequence ID" value="NC_003098.1"/>
</dbReference>
<dbReference type="RefSeq" id="WP_000102460.1">
    <property type="nucleotide sequence ID" value="NC_003098.1"/>
</dbReference>
<dbReference type="SMR" id="Q8CWS5"/>
<dbReference type="STRING" id="171101.spr0626"/>
<dbReference type="KEGG" id="spr:spr0626"/>
<dbReference type="PATRIC" id="fig|171101.6.peg.694"/>
<dbReference type="eggNOG" id="COG1190">
    <property type="taxonomic scope" value="Bacteria"/>
</dbReference>
<dbReference type="HOGENOM" id="CLU_008255_6_0_9"/>
<dbReference type="Proteomes" id="UP000000586">
    <property type="component" value="Chromosome"/>
</dbReference>
<dbReference type="GO" id="GO:0005737">
    <property type="term" value="C:cytoplasm"/>
    <property type="evidence" value="ECO:0000318"/>
    <property type="project" value="GO_Central"/>
</dbReference>
<dbReference type="GO" id="GO:0005829">
    <property type="term" value="C:cytosol"/>
    <property type="evidence" value="ECO:0000318"/>
    <property type="project" value="GO_Central"/>
</dbReference>
<dbReference type="GO" id="GO:0005524">
    <property type="term" value="F:ATP binding"/>
    <property type="evidence" value="ECO:0007669"/>
    <property type="project" value="UniProtKB-UniRule"/>
</dbReference>
<dbReference type="GO" id="GO:0140096">
    <property type="term" value="F:catalytic activity, acting on a protein"/>
    <property type="evidence" value="ECO:0007669"/>
    <property type="project" value="UniProtKB-ARBA"/>
</dbReference>
<dbReference type="GO" id="GO:0004824">
    <property type="term" value="F:lysine-tRNA ligase activity"/>
    <property type="evidence" value="ECO:0000318"/>
    <property type="project" value="GO_Central"/>
</dbReference>
<dbReference type="GO" id="GO:0000287">
    <property type="term" value="F:magnesium ion binding"/>
    <property type="evidence" value="ECO:0007669"/>
    <property type="project" value="UniProtKB-UniRule"/>
</dbReference>
<dbReference type="GO" id="GO:0016740">
    <property type="term" value="F:transferase activity"/>
    <property type="evidence" value="ECO:0007669"/>
    <property type="project" value="UniProtKB-ARBA"/>
</dbReference>
<dbReference type="GO" id="GO:0000049">
    <property type="term" value="F:tRNA binding"/>
    <property type="evidence" value="ECO:0000318"/>
    <property type="project" value="GO_Central"/>
</dbReference>
<dbReference type="GO" id="GO:0006430">
    <property type="term" value="P:lysyl-tRNA aminoacylation"/>
    <property type="evidence" value="ECO:0000318"/>
    <property type="project" value="GO_Central"/>
</dbReference>
<dbReference type="CDD" id="cd00775">
    <property type="entry name" value="LysRS_core"/>
    <property type="match status" value="1"/>
</dbReference>
<dbReference type="CDD" id="cd04322">
    <property type="entry name" value="LysRS_N"/>
    <property type="match status" value="1"/>
</dbReference>
<dbReference type="FunFam" id="2.40.50.140:FF:000024">
    <property type="entry name" value="Lysine--tRNA ligase"/>
    <property type="match status" value="1"/>
</dbReference>
<dbReference type="FunFam" id="3.30.930.10:FF:000001">
    <property type="entry name" value="Lysine--tRNA ligase"/>
    <property type="match status" value="1"/>
</dbReference>
<dbReference type="Gene3D" id="3.30.930.10">
    <property type="entry name" value="Bira Bifunctional Protein, Domain 2"/>
    <property type="match status" value="1"/>
</dbReference>
<dbReference type="Gene3D" id="2.40.50.140">
    <property type="entry name" value="Nucleic acid-binding proteins"/>
    <property type="match status" value="1"/>
</dbReference>
<dbReference type="HAMAP" id="MF_00252">
    <property type="entry name" value="Lys_tRNA_synth_class2"/>
    <property type="match status" value="1"/>
</dbReference>
<dbReference type="InterPro" id="IPR004364">
    <property type="entry name" value="Aa-tRNA-synt_II"/>
</dbReference>
<dbReference type="InterPro" id="IPR006195">
    <property type="entry name" value="aa-tRNA-synth_II"/>
</dbReference>
<dbReference type="InterPro" id="IPR045864">
    <property type="entry name" value="aa-tRNA-synth_II/BPL/LPL"/>
</dbReference>
<dbReference type="InterPro" id="IPR002313">
    <property type="entry name" value="Lys-tRNA-ligase_II"/>
</dbReference>
<dbReference type="InterPro" id="IPR034762">
    <property type="entry name" value="Lys-tRNA-ligase_II_bac/euk"/>
</dbReference>
<dbReference type="InterPro" id="IPR044136">
    <property type="entry name" value="Lys-tRNA-ligase_II_N"/>
</dbReference>
<dbReference type="InterPro" id="IPR018149">
    <property type="entry name" value="Lys-tRNA-synth_II_C"/>
</dbReference>
<dbReference type="InterPro" id="IPR012340">
    <property type="entry name" value="NA-bd_OB-fold"/>
</dbReference>
<dbReference type="InterPro" id="IPR004365">
    <property type="entry name" value="NA-bd_OB_tRNA"/>
</dbReference>
<dbReference type="NCBIfam" id="TIGR00499">
    <property type="entry name" value="lysS_bact"/>
    <property type="match status" value="1"/>
</dbReference>
<dbReference type="NCBIfam" id="NF001756">
    <property type="entry name" value="PRK00484.1"/>
    <property type="match status" value="1"/>
</dbReference>
<dbReference type="PANTHER" id="PTHR42918:SF15">
    <property type="entry name" value="LYSINE--TRNA LIGASE, CHLOROPLASTIC_MITOCHONDRIAL"/>
    <property type="match status" value="1"/>
</dbReference>
<dbReference type="PANTHER" id="PTHR42918">
    <property type="entry name" value="LYSYL-TRNA SYNTHETASE"/>
    <property type="match status" value="1"/>
</dbReference>
<dbReference type="Pfam" id="PF00152">
    <property type="entry name" value="tRNA-synt_2"/>
    <property type="match status" value="1"/>
</dbReference>
<dbReference type="Pfam" id="PF01336">
    <property type="entry name" value="tRNA_anti-codon"/>
    <property type="match status" value="1"/>
</dbReference>
<dbReference type="PIRSF" id="PIRSF039101">
    <property type="entry name" value="LysRS2"/>
    <property type="match status" value="1"/>
</dbReference>
<dbReference type="PRINTS" id="PR00982">
    <property type="entry name" value="TRNASYNTHLYS"/>
</dbReference>
<dbReference type="SUPFAM" id="SSF55681">
    <property type="entry name" value="Class II aaRS and biotin synthetases"/>
    <property type="match status" value="1"/>
</dbReference>
<dbReference type="SUPFAM" id="SSF50249">
    <property type="entry name" value="Nucleic acid-binding proteins"/>
    <property type="match status" value="1"/>
</dbReference>
<dbReference type="PROSITE" id="PS50862">
    <property type="entry name" value="AA_TRNA_LIGASE_II"/>
    <property type="match status" value="1"/>
</dbReference>
<feature type="chain" id="PRO_0000152688" description="Lysine--tRNA ligase">
    <location>
        <begin position="1"/>
        <end position="496"/>
    </location>
</feature>
<feature type="binding site" evidence="1">
    <location>
        <position position="409"/>
    </location>
    <ligand>
        <name>Mg(2+)</name>
        <dbReference type="ChEBI" id="CHEBI:18420"/>
        <label>1</label>
    </ligand>
</feature>
<feature type="binding site" evidence="1">
    <location>
        <position position="416"/>
    </location>
    <ligand>
        <name>Mg(2+)</name>
        <dbReference type="ChEBI" id="CHEBI:18420"/>
        <label>1</label>
    </ligand>
</feature>
<feature type="binding site" evidence="1">
    <location>
        <position position="416"/>
    </location>
    <ligand>
        <name>Mg(2+)</name>
        <dbReference type="ChEBI" id="CHEBI:18420"/>
        <label>2</label>
    </ligand>
</feature>
<comment type="catalytic activity">
    <reaction evidence="1">
        <text>tRNA(Lys) + L-lysine + ATP = L-lysyl-tRNA(Lys) + AMP + diphosphate</text>
        <dbReference type="Rhea" id="RHEA:20792"/>
        <dbReference type="Rhea" id="RHEA-COMP:9696"/>
        <dbReference type="Rhea" id="RHEA-COMP:9697"/>
        <dbReference type="ChEBI" id="CHEBI:30616"/>
        <dbReference type="ChEBI" id="CHEBI:32551"/>
        <dbReference type="ChEBI" id="CHEBI:33019"/>
        <dbReference type="ChEBI" id="CHEBI:78442"/>
        <dbReference type="ChEBI" id="CHEBI:78529"/>
        <dbReference type="ChEBI" id="CHEBI:456215"/>
        <dbReference type="EC" id="6.1.1.6"/>
    </reaction>
</comment>
<comment type="cofactor">
    <cofactor evidence="1">
        <name>Mg(2+)</name>
        <dbReference type="ChEBI" id="CHEBI:18420"/>
    </cofactor>
    <text evidence="1">Binds 3 Mg(2+) ions per subunit.</text>
</comment>
<comment type="subunit">
    <text evidence="1">Homodimer.</text>
</comment>
<comment type="subcellular location">
    <subcellularLocation>
        <location evidence="1">Cytoplasm</location>
    </subcellularLocation>
</comment>
<comment type="similarity">
    <text evidence="1">Belongs to the class-II aminoacyl-tRNA synthetase family.</text>
</comment>
<name>SYK_STRR6</name>
<reference key="1">
    <citation type="journal article" date="2001" name="J. Bacteriol.">
        <title>Genome of the bacterium Streptococcus pneumoniae strain R6.</title>
        <authorList>
            <person name="Hoskins J."/>
            <person name="Alborn W.E. Jr."/>
            <person name="Arnold J."/>
            <person name="Blaszczak L.C."/>
            <person name="Burgett S."/>
            <person name="DeHoff B.S."/>
            <person name="Estrem S.T."/>
            <person name="Fritz L."/>
            <person name="Fu D.-J."/>
            <person name="Fuller W."/>
            <person name="Geringer C."/>
            <person name="Gilmour R."/>
            <person name="Glass J.S."/>
            <person name="Khoja H."/>
            <person name="Kraft A.R."/>
            <person name="Lagace R.E."/>
            <person name="LeBlanc D.J."/>
            <person name="Lee L.N."/>
            <person name="Lefkowitz E.J."/>
            <person name="Lu J."/>
            <person name="Matsushima P."/>
            <person name="McAhren S.M."/>
            <person name="McHenney M."/>
            <person name="McLeaster K."/>
            <person name="Mundy C.W."/>
            <person name="Nicas T.I."/>
            <person name="Norris F.H."/>
            <person name="O'Gara M."/>
            <person name="Peery R.B."/>
            <person name="Robertson G.T."/>
            <person name="Rockey P."/>
            <person name="Sun P.-M."/>
            <person name="Winkler M.E."/>
            <person name="Yang Y."/>
            <person name="Young-Bellido M."/>
            <person name="Zhao G."/>
            <person name="Zook C.A."/>
            <person name="Baltz R.H."/>
            <person name="Jaskunas S.R."/>
            <person name="Rosteck P.R. Jr."/>
            <person name="Skatrud P.L."/>
            <person name="Glass J.I."/>
        </authorList>
    </citation>
    <scope>NUCLEOTIDE SEQUENCE [LARGE SCALE GENOMIC DNA]</scope>
    <source>
        <strain>ATCC BAA-255 / R6</strain>
    </source>
</reference>